<keyword id="KW-0963">Cytoplasm</keyword>
<keyword id="KW-1185">Reference proteome</keyword>
<keyword id="KW-0690">Ribosome biogenesis</keyword>
<evidence type="ECO:0000255" key="1">
    <source>
        <dbReference type="HAMAP-Rule" id="MF_00003"/>
    </source>
</evidence>
<dbReference type="EMBL" id="CP000909">
    <property type="protein sequence ID" value="ABY36213.1"/>
    <property type="molecule type" value="Genomic_DNA"/>
</dbReference>
<dbReference type="RefSeq" id="WP_012258866.1">
    <property type="nucleotide sequence ID" value="NC_010175.1"/>
</dbReference>
<dbReference type="RefSeq" id="YP_001636602.1">
    <property type="nucleotide sequence ID" value="NC_010175.1"/>
</dbReference>
<dbReference type="SMR" id="A9WGP7"/>
<dbReference type="FunCoup" id="A9WGP7">
    <property type="interactions" value="408"/>
</dbReference>
<dbReference type="STRING" id="324602.Caur_3014"/>
<dbReference type="EnsemblBacteria" id="ABY36213">
    <property type="protein sequence ID" value="ABY36213"/>
    <property type="gene ID" value="Caur_3014"/>
</dbReference>
<dbReference type="KEGG" id="cau:Caur_3014"/>
<dbReference type="PATRIC" id="fig|324602.8.peg.3415"/>
<dbReference type="eggNOG" id="COG0858">
    <property type="taxonomic scope" value="Bacteria"/>
</dbReference>
<dbReference type="HOGENOM" id="CLU_089475_6_3_0"/>
<dbReference type="InParanoid" id="A9WGP7"/>
<dbReference type="Proteomes" id="UP000002008">
    <property type="component" value="Chromosome"/>
</dbReference>
<dbReference type="GO" id="GO:0005829">
    <property type="term" value="C:cytosol"/>
    <property type="evidence" value="ECO:0000318"/>
    <property type="project" value="GO_Central"/>
</dbReference>
<dbReference type="GO" id="GO:0043024">
    <property type="term" value="F:ribosomal small subunit binding"/>
    <property type="evidence" value="ECO:0000318"/>
    <property type="project" value="GO_Central"/>
</dbReference>
<dbReference type="GO" id="GO:0030490">
    <property type="term" value="P:maturation of SSU-rRNA"/>
    <property type="evidence" value="ECO:0007669"/>
    <property type="project" value="UniProtKB-UniRule"/>
</dbReference>
<dbReference type="GO" id="GO:0042254">
    <property type="term" value="P:ribosome biogenesis"/>
    <property type="evidence" value="ECO:0000318"/>
    <property type="project" value="GO_Central"/>
</dbReference>
<dbReference type="Gene3D" id="3.30.300.20">
    <property type="match status" value="1"/>
</dbReference>
<dbReference type="HAMAP" id="MF_00003">
    <property type="entry name" value="RbfA"/>
    <property type="match status" value="1"/>
</dbReference>
<dbReference type="InterPro" id="IPR015946">
    <property type="entry name" value="KH_dom-like_a/b"/>
</dbReference>
<dbReference type="InterPro" id="IPR000238">
    <property type="entry name" value="RbfA"/>
</dbReference>
<dbReference type="InterPro" id="IPR023799">
    <property type="entry name" value="RbfA_dom_sf"/>
</dbReference>
<dbReference type="NCBIfam" id="TIGR00082">
    <property type="entry name" value="rbfA"/>
    <property type="match status" value="1"/>
</dbReference>
<dbReference type="PANTHER" id="PTHR33515">
    <property type="entry name" value="RIBOSOME-BINDING FACTOR A, CHLOROPLASTIC-RELATED"/>
    <property type="match status" value="1"/>
</dbReference>
<dbReference type="PANTHER" id="PTHR33515:SF1">
    <property type="entry name" value="RIBOSOME-BINDING FACTOR A, CHLOROPLASTIC-RELATED"/>
    <property type="match status" value="1"/>
</dbReference>
<dbReference type="Pfam" id="PF02033">
    <property type="entry name" value="RBFA"/>
    <property type="match status" value="1"/>
</dbReference>
<dbReference type="SUPFAM" id="SSF89919">
    <property type="entry name" value="Ribosome-binding factor A, RbfA"/>
    <property type="match status" value="1"/>
</dbReference>
<comment type="function">
    <text evidence="1">One of several proteins that assist in the late maturation steps of the functional core of the 30S ribosomal subunit. Associates with free 30S ribosomal subunits (but not with 30S subunits that are part of 70S ribosomes or polysomes). Required for efficient processing of 16S rRNA. May interact with the 5'-terminal helix region of 16S rRNA.</text>
</comment>
<comment type="subunit">
    <text evidence="1">Monomer. Binds 30S ribosomal subunits, but not 50S ribosomal subunits or 70S ribosomes.</text>
</comment>
<comment type="subcellular location">
    <subcellularLocation>
        <location evidence="1">Cytoplasm</location>
    </subcellularLocation>
</comment>
<comment type="similarity">
    <text evidence="1">Belongs to the RbfA family.</text>
</comment>
<proteinExistence type="inferred from homology"/>
<organism>
    <name type="scientific">Chloroflexus aurantiacus (strain ATCC 29366 / DSM 635 / J-10-fl)</name>
    <dbReference type="NCBI Taxonomy" id="324602"/>
    <lineage>
        <taxon>Bacteria</taxon>
        <taxon>Bacillati</taxon>
        <taxon>Chloroflexota</taxon>
        <taxon>Chloroflexia</taxon>
        <taxon>Chloroflexales</taxon>
        <taxon>Chloroflexineae</taxon>
        <taxon>Chloroflexaceae</taxon>
        <taxon>Chloroflexus</taxon>
    </lineage>
</organism>
<reference key="1">
    <citation type="journal article" date="2011" name="BMC Genomics">
        <title>Complete genome sequence of the filamentous anoxygenic phototrophic bacterium Chloroflexus aurantiacus.</title>
        <authorList>
            <person name="Tang K.H."/>
            <person name="Barry K."/>
            <person name="Chertkov O."/>
            <person name="Dalin E."/>
            <person name="Han C.S."/>
            <person name="Hauser L.J."/>
            <person name="Honchak B.M."/>
            <person name="Karbach L.E."/>
            <person name="Land M.L."/>
            <person name="Lapidus A."/>
            <person name="Larimer F.W."/>
            <person name="Mikhailova N."/>
            <person name="Pitluck S."/>
            <person name="Pierson B.K."/>
            <person name="Blankenship R.E."/>
        </authorList>
    </citation>
    <scope>NUCLEOTIDE SEQUENCE [LARGE SCALE GENOMIC DNA]</scope>
    <source>
        <strain>ATCC 29366 / DSM 635 / J-10-fl</strain>
    </source>
</reference>
<sequence length="127" mass="14586">MAKHRLQQVADTMQRVLGDVIQKELKDPRVGFATVTGVEVSADLQHAKVRISVMGSPEEREAAMAALQRARGFLRKRVAEEMSYMRFVPELHLIQDTSLDYTMHMDEVFRAIQHERLVNPPKLDDEQ</sequence>
<gene>
    <name evidence="1" type="primary">rbfA</name>
    <name type="ordered locus">Caur_3014</name>
</gene>
<name>RBFA_CHLAA</name>
<feature type="chain" id="PRO_0000329325" description="Ribosome-binding factor A">
    <location>
        <begin position="1"/>
        <end position="127"/>
    </location>
</feature>
<protein>
    <recommendedName>
        <fullName evidence="1">Ribosome-binding factor A</fullName>
    </recommendedName>
</protein>
<accession>A9WGP7</accession>